<feature type="chain" id="PRO_1000134209" description="ATP synthase gamma chain">
    <location>
        <begin position="1"/>
        <end position="291"/>
    </location>
</feature>
<proteinExistence type="inferred from homology"/>
<comment type="function">
    <text evidence="1">Produces ATP from ADP in the presence of a proton gradient across the membrane. The gamma chain is believed to be important in regulating ATPase activity and the flow of protons through the CF(0) complex.</text>
</comment>
<comment type="subunit">
    <text evidence="1">F-type ATPases have 2 components, CF(1) - the catalytic core - and CF(0) - the membrane proton channel. CF(1) has five subunits: alpha(3), beta(3), gamma(1), delta(1), epsilon(1). CF(0) has three main subunits: a, b and c.</text>
</comment>
<comment type="subcellular location">
    <subcellularLocation>
        <location evidence="1">Cell membrane</location>
        <topology evidence="1">Peripheral membrane protein</topology>
    </subcellularLocation>
</comment>
<comment type="similarity">
    <text evidence="1">Belongs to the ATPase gamma chain family.</text>
</comment>
<reference key="1">
    <citation type="journal article" date="2008" name="PLoS ONE">
        <title>Genome sequence of a lancefield group C Streptococcus zooepidemicus strain causing epidemic nephritis: new information about an old disease.</title>
        <authorList>
            <person name="Beres S.B."/>
            <person name="Sesso R."/>
            <person name="Pinto S.W.L."/>
            <person name="Hoe N.P."/>
            <person name="Porcella S.F."/>
            <person name="Deleo F.R."/>
            <person name="Musser J.M."/>
        </authorList>
    </citation>
    <scope>NUCLEOTIDE SEQUENCE [LARGE SCALE GENOMIC DNA]</scope>
    <source>
        <strain>MGCS10565</strain>
    </source>
</reference>
<name>ATPG_STREM</name>
<dbReference type="EMBL" id="CP001129">
    <property type="protein sequence ID" value="ACG62157.1"/>
    <property type="molecule type" value="Genomic_DNA"/>
</dbReference>
<dbReference type="RefSeq" id="WP_012515431.1">
    <property type="nucleotide sequence ID" value="NC_011134.1"/>
</dbReference>
<dbReference type="SMR" id="B4U2E0"/>
<dbReference type="KEGG" id="sez:Sez_0797"/>
<dbReference type="HOGENOM" id="CLU_050669_0_1_9"/>
<dbReference type="Proteomes" id="UP000001873">
    <property type="component" value="Chromosome"/>
</dbReference>
<dbReference type="GO" id="GO:0005886">
    <property type="term" value="C:plasma membrane"/>
    <property type="evidence" value="ECO:0007669"/>
    <property type="project" value="UniProtKB-SubCell"/>
</dbReference>
<dbReference type="GO" id="GO:0045259">
    <property type="term" value="C:proton-transporting ATP synthase complex"/>
    <property type="evidence" value="ECO:0007669"/>
    <property type="project" value="UniProtKB-KW"/>
</dbReference>
<dbReference type="GO" id="GO:0005524">
    <property type="term" value="F:ATP binding"/>
    <property type="evidence" value="ECO:0007669"/>
    <property type="project" value="UniProtKB-UniRule"/>
</dbReference>
<dbReference type="GO" id="GO:0046933">
    <property type="term" value="F:proton-transporting ATP synthase activity, rotational mechanism"/>
    <property type="evidence" value="ECO:0007669"/>
    <property type="project" value="UniProtKB-UniRule"/>
</dbReference>
<dbReference type="GO" id="GO:0042777">
    <property type="term" value="P:proton motive force-driven plasma membrane ATP synthesis"/>
    <property type="evidence" value="ECO:0007669"/>
    <property type="project" value="UniProtKB-UniRule"/>
</dbReference>
<dbReference type="CDD" id="cd12151">
    <property type="entry name" value="F1-ATPase_gamma"/>
    <property type="match status" value="1"/>
</dbReference>
<dbReference type="FunFam" id="3.40.1380.10:FF:000002">
    <property type="entry name" value="ATP synthase gamma chain"/>
    <property type="match status" value="1"/>
</dbReference>
<dbReference type="Gene3D" id="3.40.1380.10">
    <property type="match status" value="1"/>
</dbReference>
<dbReference type="Gene3D" id="1.10.287.80">
    <property type="entry name" value="ATP synthase, gamma subunit, helix hairpin domain"/>
    <property type="match status" value="1"/>
</dbReference>
<dbReference type="HAMAP" id="MF_00815">
    <property type="entry name" value="ATP_synth_gamma_bact"/>
    <property type="match status" value="1"/>
</dbReference>
<dbReference type="InterPro" id="IPR035968">
    <property type="entry name" value="ATP_synth_F1_ATPase_gsu"/>
</dbReference>
<dbReference type="InterPro" id="IPR000131">
    <property type="entry name" value="ATP_synth_F1_gsu"/>
</dbReference>
<dbReference type="InterPro" id="IPR023632">
    <property type="entry name" value="ATP_synth_F1_gsu_CS"/>
</dbReference>
<dbReference type="NCBIfam" id="TIGR01146">
    <property type="entry name" value="ATPsyn_F1gamma"/>
    <property type="match status" value="1"/>
</dbReference>
<dbReference type="NCBIfam" id="NF004147">
    <property type="entry name" value="PRK05621.2-1"/>
    <property type="match status" value="1"/>
</dbReference>
<dbReference type="PANTHER" id="PTHR11693">
    <property type="entry name" value="ATP SYNTHASE GAMMA CHAIN"/>
    <property type="match status" value="1"/>
</dbReference>
<dbReference type="PANTHER" id="PTHR11693:SF22">
    <property type="entry name" value="ATP SYNTHASE SUBUNIT GAMMA, MITOCHONDRIAL"/>
    <property type="match status" value="1"/>
</dbReference>
<dbReference type="Pfam" id="PF00231">
    <property type="entry name" value="ATP-synt"/>
    <property type="match status" value="1"/>
</dbReference>
<dbReference type="PRINTS" id="PR00126">
    <property type="entry name" value="ATPASEGAMMA"/>
</dbReference>
<dbReference type="SUPFAM" id="SSF52943">
    <property type="entry name" value="ATP synthase (F1-ATPase), gamma subunit"/>
    <property type="match status" value="1"/>
</dbReference>
<dbReference type="PROSITE" id="PS00153">
    <property type="entry name" value="ATPASE_GAMMA"/>
    <property type="match status" value="1"/>
</dbReference>
<sequence length="291" mass="31959">MAGSLSEIKAKIISTEKTSKITSAMRMVSSAKLVKSEQAARDFQIYASKIRQITTDLLKSDLTTGSDNPMLVSRPVKKTGYIVITSDKGLVGGYNSKILKSIMDMIQEYHAAGDYEIISIGSIGSDFFKARGMNVAFELRGLADQPSFDQVGRIISQSVDMFVNEIFDELYVCYNHHVNSLTSQVRVQRMLPISDLVAEEAAEEGVTGFELEPNRHVILEQLLPQFTESLIYGAIIDAKTAEHAAGMTAMQTATDNAKHVINDLTIQYNRARQAAITQEITEIVAGANALE</sequence>
<gene>
    <name evidence="1" type="primary">atpG</name>
    <name type="ordered locus">Sez_0797</name>
</gene>
<accession>B4U2E0</accession>
<keyword id="KW-0066">ATP synthesis</keyword>
<keyword id="KW-1003">Cell membrane</keyword>
<keyword id="KW-0139">CF(1)</keyword>
<keyword id="KW-0375">Hydrogen ion transport</keyword>
<keyword id="KW-0406">Ion transport</keyword>
<keyword id="KW-0472">Membrane</keyword>
<keyword id="KW-0813">Transport</keyword>
<organism>
    <name type="scientific">Streptococcus equi subsp. zooepidemicus (strain MGCS10565)</name>
    <dbReference type="NCBI Taxonomy" id="552526"/>
    <lineage>
        <taxon>Bacteria</taxon>
        <taxon>Bacillati</taxon>
        <taxon>Bacillota</taxon>
        <taxon>Bacilli</taxon>
        <taxon>Lactobacillales</taxon>
        <taxon>Streptococcaceae</taxon>
        <taxon>Streptococcus</taxon>
    </lineage>
</organism>
<protein>
    <recommendedName>
        <fullName evidence="1">ATP synthase gamma chain</fullName>
    </recommendedName>
    <alternativeName>
        <fullName evidence="1">ATP synthase F1 sector gamma subunit</fullName>
    </alternativeName>
    <alternativeName>
        <fullName evidence="1">F-ATPase gamma subunit</fullName>
    </alternativeName>
</protein>
<evidence type="ECO:0000255" key="1">
    <source>
        <dbReference type="HAMAP-Rule" id="MF_00815"/>
    </source>
</evidence>